<dbReference type="EMBL" id="Z73138">
    <property type="protein sequence ID" value="CAA97482.1"/>
    <property type="molecule type" value="Genomic_DNA"/>
</dbReference>
<dbReference type="EMBL" id="AY558188">
    <property type="protein sequence ID" value="AAS56514.1"/>
    <property type="molecule type" value="Genomic_DNA"/>
</dbReference>
<dbReference type="EMBL" id="BK006945">
    <property type="protein sequence ID" value="DAA09288.1"/>
    <property type="molecule type" value="Genomic_DNA"/>
</dbReference>
<dbReference type="PIR" id="S64784">
    <property type="entry name" value="S64784"/>
</dbReference>
<dbReference type="RefSeq" id="NP_013067.1">
    <property type="nucleotide sequence ID" value="NM_001181853.1"/>
</dbReference>
<dbReference type="SMR" id="Q07843"/>
<dbReference type="BioGRID" id="31220">
    <property type="interactions" value="128"/>
</dbReference>
<dbReference type="DIP" id="DIP-2875N"/>
<dbReference type="FunCoup" id="Q07843">
    <property type="interactions" value="40"/>
</dbReference>
<dbReference type="IntAct" id="Q07843">
    <property type="interactions" value="4"/>
</dbReference>
<dbReference type="MINT" id="Q07843"/>
<dbReference type="STRING" id="4932.YLL033W"/>
<dbReference type="PaxDb" id="4932-YLL033W"/>
<dbReference type="PeptideAtlas" id="Q07843"/>
<dbReference type="EnsemblFungi" id="YLL033W_mRNA">
    <property type="protein sequence ID" value="YLL033W"/>
    <property type="gene ID" value="YLL033W"/>
</dbReference>
<dbReference type="GeneID" id="850626"/>
<dbReference type="KEGG" id="sce:YLL033W"/>
<dbReference type="AGR" id="SGD:S000003956"/>
<dbReference type="SGD" id="S000003956">
    <property type="gene designation" value="IRC19"/>
</dbReference>
<dbReference type="VEuPathDB" id="FungiDB:YLL033W"/>
<dbReference type="eggNOG" id="ENOG502S35W">
    <property type="taxonomic scope" value="Eukaryota"/>
</dbReference>
<dbReference type="HOGENOM" id="CLU_106818_0_0_1"/>
<dbReference type="InParanoid" id="Q07843"/>
<dbReference type="OMA" id="FMRLKPF"/>
<dbReference type="OrthoDB" id="3991133at2759"/>
<dbReference type="BioCyc" id="YEAST:G3O-32136-MONOMER"/>
<dbReference type="BioGRID-ORCS" id="850626">
    <property type="hits" value="0 hits in 10 CRISPR screens"/>
</dbReference>
<dbReference type="PRO" id="PR:Q07843"/>
<dbReference type="Proteomes" id="UP000002311">
    <property type="component" value="Chromosome XII"/>
</dbReference>
<dbReference type="RNAct" id="Q07843">
    <property type="molecule type" value="protein"/>
</dbReference>
<dbReference type="GO" id="GO:0030437">
    <property type="term" value="P:ascospore formation"/>
    <property type="evidence" value="ECO:0000315"/>
    <property type="project" value="SGD"/>
</dbReference>
<dbReference type="GO" id="GO:0006302">
    <property type="term" value="P:double-strand break repair"/>
    <property type="evidence" value="ECO:0000315"/>
    <property type="project" value="SGD"/>
</dbReference>
<dbReference type="GO" id="GO:0006312">
    <property type="term" value="P:mitotic recombination"/>
    <property type="evidence" value="ECO:0000315"/>
    <property type="project" value="SGD"/>
</dbReference>
<dbReference type="InterPro" id="IPR016613">
    <property type="entry name" value="Irc19"/>
</dbReference>
<dbReference type="PIRSF" id="PIRSF013329">
    <property type="entry name" value="UCP013329"/>
    <property type="match status" value="1"/>
</dbReference>
<sequence length="230" mass="27378">MRKPSITITTAKAIITPDYTLIKSHSKYQLPSRFQKLDADSPERSTVVKLFYRRFMRLKPFISNVKMVKDTYRDYVRYKFMKENYELKRYLVFNPDGLRSKINLELLSNTKCCERILPVTEMQRTLEFVLKSCSYLPETKVQKWDIARDNTYCRQILKNLLTMQYEKYRSILHRGIGHDELDVKFSHLKTTSSPLTKLNKTEKKKIPLFKVFSDFDTTLIYLNETLGTRL</sequence>
<accession>Q07843</accession>
<accession>D6VXX2</accession>
<feature type="chain" id="PRO_0000247128" description="Increased recombination centers protein 19">
    <location>
        <begin position="1"/>
        <end position="230"/>
    </location>
</feature>
<protein>
    <recommendedName>
        <fullName>Increased recombination centers protein 19</fullName>
    </recommendedName>
    <alternativeName>
        <fullName>Respiratory growth protein 4</fullName>
    </alternativeName>
</protein>
<reference key="1">
    <citation type="journal article" date="1997" name="Nature">
        <title>The nucleotide sequence of Saccharomyces cerevisiae chromosome XII.</title>
        <authorList>
            <person name="Johnston M."/>
            <person name="Hillier L.W."/>
            <person name="Riles L."/>
            <person name="Albermann K."/>
            <person name="Andre B."/>
            <person name="Ansorge W."/>
            <person name="Benes V."/>
            <person name="Brueckner M."/>
            <person name="Delius H."/>
            <person name="Dubois E."/>
            <person name="Duesterhoeft A."/>
            <person name="Entian K.-D."/>
            <person name="Floeth M."/>
            <person name="Goffeau A."/>
            <person name="Hebling U."/>
            <person name="Heumann K."/>
            <person name="Heuss-Neitzel D."/>
            <person name="Hilbert H."/>
            <person name="Hilger F."/>
            <person name="Kleine K."/>
            <person name="Koetter P."/>
            <person name="Louis E.J."/>
            <person name="Messenguy F."/>
            <person name="Mewes H.-W."/>
            <person name="Miosga T."/>
            <person name="Moestl D."/>
            <person name="Mueller-Auer S."/>
            <person name="Nentwich U."/>
            <person name="Obermaier B."/>
            <person name="Piravandi E."/>
            <person name="Pohl T.M."/>
            <person name="Portetelle D."/>
            <person name="Purnelle B."/>
            <person name="Rechmann S."/>
            <person name="Rieger M."/>
            <person name="Rinke M."/>
            <person name="Rose M."/>
            <person name="Scharfe M."/>
            <person name="Scherens B."/>
            <person name="Scholler P."/>
            <person name="Schwager C."/>
            <person name="Schwarz S."/>
            <person name="Underwood A.P."/>
            <person name="Urrestarazu L.A."/>
            <person name="Vandenbol M."/>
            <person name="Verhasselt P."/>
            <person name="Vierendeels F."/>
            <person name="Voet M."/>
            <person name="Volckaert G."/>
            <person name="Voss H."/>
            <person name="Wambutt R."/>
            <person name="Wedler E."/>
            <person name="Wedler H."/>
            <person name="Zimmermann F.K."/>
            <person name="Zollner A."/>
            <person name="Hani J."/>
            <person name="Hoheisel J.D."/>
        </authorList>
    </citation>
    <scope>NUCLEOTIDE SEQUENCE [LARGE SCALE GENOMIC DNA]</scope>
    <source>
        <strain>ATCC 204508 / S288c</strain>
    </source>
</reference>
<reference key="2">
    <citation type="journal article" date="2014" name="G3 (Bethesda)">
        <title>The reference genome sequence of Saccharomyces cerevisiae: Then and now.</title>
        <authorList>
            <person name="Engel S.R."/>
            <person name="Dietrich F.S."/>
            <person name="Fisk D.G."/>
            <person name="Binkley G."/>
            <person name="Balakrishnan R."/>
            <person name="Costanzo M.C."/>
            <person name="Dwight S.S."/>
            <person name="Hitz B.C."/>
            <person name="Karra K."/>
            <person name="Nash R.S."/>
            <person name="Weng S."/>
            <person name="Wong E.D."/>
            <person name="Lloyd P."/>
            <person name="Skrzypek M.S."/>
            <person name="Miyasato S.R."/>
            <person name="Simison M."/>
            <person name="Cherry J.M."/>
        </authorList>
    </citation>
    <scope>GENOME REANNOTATION</scope>
    <source>
        <strain>ATCC 204508 / S288c</strain>
    </source>
</reference>
<reference key="3">
    <citation type="journal article" date="2007" name="Genome Res.">
        <title>Approaching a complete repository of sequence-verified protein-encoding clones for Saccharomyces cerevisiae.</title>
        <authorList>
            <person name="Hu Y."/>
            <person name="Rolfs A."/>
            <person name="Bhullar B."/>
            <person name="Murthy T.V.S."/>
            <person name="Zhu C."/>
            <person name="Berger M.F."/>
            <person name="Camargo A.A."/>
            <person name="Kelley F."/>
            <person name="McCarron S."/>
            <person name="Jepson D."/>
            <person name="Richardson A."/>
            <person name="Raphael J."/>
            <person name="Moreira D."/>
            <person name="Taycher E."/>
            <person name="Zuo D."/>
            <person name="Mohr S."/>
            <person name="Kane M.F."/>
            <person name="Williamson J."/>
            <person name="Simpson A.J.G."/>
            <person name="Bulyk M.L."/>
            <person name="Harlow E."/>
            <person name="Marsischky G."/>
            <person name="Kolodner R.D."/>
            <person name="LaBaer J."/>
        </authorList>
    </citation>
    <scope>NUCLEOTIDE SEQUENCE [GENOMIC DNA]</scope>
    <source>
        <strain>ATCC 204508 / S288c</strain>
    </source>
</reference>
<reference key="4">
    <citation type="journal article" date="1998" name="Science">
        <title>The transcriptional program of sporulation in budding yeast.</title>
        <authorList>
            <person name="Chu S."/>
            <person name="DeRisi J."/>
            <person name="Eisen M."/>
            <person name="Mulholland J."/>
            <person name="Botstein D."/>
            <person name="Brown P.O."/>
            <person name="Herskowitz I."/>
        </authorList>
    </citation>
    <scope>INDUCTION</scope>
</reference>
<reference key="5">
    <citation type="journal article" date="2002" name="Proc. Natl. Acad. Sci. U.S.A.">
        <title>Parallel phenotypic analysis of sporulation and postgermination growth in Saccharomyces cerevisiae.</title>
        <authorList>
            <person name="Deutschbauer A.M."/>
            <person name="Williams R.M."/>
            <person name="Chu A.M."/>
            <person name="Davis R.W."/>
        </authorList>
    </citation>
    <scope>FUNCTION</scope>
</reference>
<reference key="6">
    <citation type="journal article" date="2002" name="Yeast">
        <title>Systematic analysis of sporulation phenotypes in 624 non-lethal homozygous deletion strains of Saccharomyces cerevisiae.</title>
        <authorList>
            <person name="Briza P."/>
            <person name="Bogengruber E."/>
            <person name="Thuer A."/>
            <person name="Ruetzler M."/>
            <person name="Muensterkoetter M."/>
            <person name="Dawes I.W."/>
            <person name="Breitenbach M."/>
        </authorList>
    </citation>
    <scope>FUNCTION</scope>
</reference>
<reference key="7">
    <citation type="journal article" date="2007" name="PLoS Genet.">
        <title>Genome-wide analysis of Rad52 foci reveals diverse mechanisms impacting recombination.</title>
        <authorList>
            <person name="Alvaro D."/>
            <person name="Lisby M."/>
            <person name="Rothstein R."/>
        </authorList>
    </citation>
    <scope>DISRUPTION PHENOTYPE</scope>
</reference>
<reference key="8">
    <citation type="journal article" date="2009" name="Genome Biol.">
        <title>Genome-wide deletion mutant analysis reveals genes required for respiratory growth, mitochondrial genome maintenance and mitochondrial protein synthesis in Saccharomyces cerevisiae.</title>
        <authorList>
            <person name="Merz S."/>
            <person name="Westermann B."/>
        </authorList>
    </citation>
    <scope>FUNCTION</scope>
</reference>
<evidence type="ECO:0000269" key="1">
    <source>
    </source>
</evidence>
<evidence type="ECO:0000269" key="2">
    <source>
    </source>
</evidence>
<evidence type="ECO:0000269" key="3">
    <source>
    </source>
</evidence>
<evidence type="ECO:0000269" key="4">
    <source>
    </source>
</evidence>
<evidence type="ECO:0000269" key="5">
    <source>
    </source>
</evidence>
<evidence type="ECO:0000305" key="6"/>
<proteinExistence type="evidence at transcript level"/>
<name>IRC19_YEAST</name>
<comment type="function">
    <text evidence="1 2 4">Involved in sporulation and maintenance of the mitochondrial DNA. Is probably involved in a pathway contributing to genomic integrity.</text>
</comment>
<comment type="induction">
    <text evidence="5">During sporulation.</text>
</comment>
<comment type="disruption phenotype">
    <text evidence="3">Displays increased levels of spontaneous RAD52 foci in proliferating diploid cells.</text>
</comment>
<comment type="similarity">
    <text evidence="6">Belongs to the IRC19 family.</text>
</comment>
<organism>
    <name type="scientific">Saccharomyces cerevisiae (strain ATCC 204508 / S288c)</name>
    <name type="common">Baker's yeast</name>
    <dbReference type="NCBI Taxonomy" id="559292"/>
    <lineage>
        <taxon>Eukaryota</taxon>
        <taxon>Fungi</taxon>
        <taxon>Dikarya</taxon>
        <taxon>Ascomycota</taxon>
        <taxon>Saccharomycotina</taxon>
        <taxon>Saccharomycetes</taxon>
        <taxon>Saccharomycetales</taxon>
        <taxon>Saccharomycetaceae</taxon>
        <taxon>Saccharomyces</taxon>
    </lineage>
</organism>
<keyword id="KW-1185">Reference proteome</keyword>
<keyword id="KW-0749">Sporulation</keyword>
<gene>
    <name type="primary">IRC19</name>
    <name type="synonym">RRG4</name>
    <name type="ordered locus">YLL033W</name>
</gene>